<feature type="chain" id="PRO_1000197273" description="3-hydroxyacyl-[acyl-carrier-protein] dehydratase FabZ">
    <location>
        <begin position="1"/>
        <end position="142"/>
    </location>
</feature>
<feature type="active site" evidence="1">
    <location>
        <position position="48"/>
    </location>
</feature>
<comment type="function">
    <text evidence="1">Involved in unsaturated fatty acids biosynthesis. Catalyzes the dehydration of short chain beta-hydroxyacyl-ACPs and long chain saturated and unsaturated beta-hydroxyacyl-ACPs.</text>
</comment>
<comment type="catalytic activity">
    <reaction evidence="1">
        <text>a (3R)-hydroxyacyl-[ACP] = a (2E)-enoyl-[ACP] + H2O</text>
        <dbReference type="Rhea" id="RHEA:13097"/>
        <dbReference type="Rhea" id="RHEA-COMP:9925"/>
        <dbReference type="Rhea" id="RHEA-COMP:9945"/>
        <dbReference type="ChEBI" id="CHEBI:15377"/>
        <dbReference type="ChEBI" id="CHEBI:78784"/>
        <dbReference type="ChEBI" id="CHEBI:78827"/>
        <dbReference type="EC" id="4.2.1.59"/>
    </reaction>
</comment>
<comment type="subcellular location">
    <subcellularLocation>
        <location evidence="1">Cytoplasm</location>
    </subcellularLocation>
</comment>
<comment type="similarity">
    <text evidence="1">Belongs to the thioester dehydratase family. FabZ subfamily.</text>
</comment>
<reference key="1">
    <citation type="journal article" date="2008" name="Genome Biol.">
        <title>Encapsulated in silica: genome, proteome and physiology of the thermophilic bacterium Anoxybacillus flavithermus WK1.</title>
        <authorList>
            <person name="Saw J.H."/>
            <person name="Mountain B.W."/>
            <person name="Feng L."/>
            <person name="Omelchenko M.V."/>
            <person name="Hou S."/>
            <person name="Saito J.A."/>
            <person name="Stott M.B."/>
            <person name="Li D."/>
            <person name="Zhao G."/>
            <person name="Wu J."/>
            <person name="Galperin M.Y."/>
            <person name="Koonin E.V."/>
            <person name="Makarova K.S."/>
            <person name="Wolf Y.I."/>
            <person name="Rigden D.J."/>
            <person name="Dunfield P.F."/>
            <person name="Wang L."/>
            <person name="Alam M."/>
        </authorList>
    </citation>
    <scope>NUCLEOTIDE SEQUENCE [LARGE SCALE GENOMIC DNA]</scope>
    <source>
        <strain>DSM 21510 / WK1</strain>
    </source>
</reference>
<proteinExistence type="inferred from homology"/>
<accession>B7GMC9</accession>
<sequence length="142" mass="15923">MLDIQQIQQIIPHRYPFLLVDRIVEVEEGKRAVGIKNVSANEQFFVGHFPEYPVMPGVLIVEALAQVGAVAMLMKEENRGRLAFFTGIDNCRFKKQVKPGDQLRLEVEMIRFKGAIGKGKGIATVDGELVCETEMMFALGEK</sequence>
<protein>
    <recommendedName>
        <fullName evidence="1">3-hydroxyacyl-[acyl-carrier-protein] dehydratase FabZ</fullName>
        <ecNumber evidence="1">4.2.1.59</ecNumber>
    </recommendedName>
    <alternativeName>
        <fullName evidence="1">(3R)-hydroxymyristoyl-[acyl-carrier-protein] dehydratase</fullName>
        <shortName evidence="1">(3R)-hydroxymyristoyl-ACP dehydrase</shortName>
    </alternativeName>
    <alternativeName>
        <fullName evidence="1">Beta-hydroxyacyl-ACP dehydratase</fullName>
    </alternativeName>
</protein>
<gene>
    <name evidence="1" type="primary">fabZ</name>
    <name type="ordered locus">Aflv_2678</name>
</gene>
<name>FABZ_ANOFW</name>
<keyword id="KW-0963">Cytoplasm</keyword>
<keyword id="KW-0441">Lipid A biosynthesis</keyword>
<keyword id="KW-0444">Lipid biosynthesis</keyword>
<keyword id="KW-0443">Lipid metabolism</keyword>
<keyword id="KW-0456">Lyase</keyword>
<organism>
    <name type="scientific">Anoxybacillus flavithermus (strain DSM 21510 / WK1)</name>
    <dbReference type="NCBI Taxonomy" id="491915"/>
    <lineage>
        <taxon>Bacteria</taxon>
        <taxon>Bacillati</taxon>
        <taxon>Bacillota</taxon>
        <taxon>Bacilli</taxon>
        <taxon>Bacillales</taxon>
        <taxon>Anoxybacillaceae</taxon>
        <taxon>Anoxybacillus</taxon>
    </lineage>
</organism>
<evidence type="ECO:0000255" key="1">
    <source>
        <dbReference type="HAMAP-Rule" id="MF_00406"/>
    </source>
</evidence>
<dbReference type="EC" id="4.2.1.59" evidence="1"/>
<dbReference type="EMBL" id="CP000922">
    <property type="protein sequence ID" value="ACJ35031.1"/>
    <property type="molecule type" value="Genomic_DNA"/>
</dbReference>
<dbReference type="RefSeq" id="WP_012576163.1">
    <property type="nucleotide sequence ID" value="NC_011567.1"/>
</dbReference>
<dbReference type="SMR" id="B7GMC9"/>
<dbReference type="STRING" id="491915.Aflv_2678"/>
<dbReference type="GeneID" id="7038951"/>
<dbReference type="KEGG" id="afl:Aflv_2678"/>
<dbReference type="PATRIC" id="fig|491915.6.peg.2761"/>
<dbReference type="eggNOG" id="COG0764">
    <property type="taxonomic scope" value="Bacteria"/>
</dbReference>
<dbReference type="HOGENOM" id="CLU_078912_3_0_9"/>
<dbReference type="Proteomes" id="UP000000742">
    <property type="component" value="Chromosome"/>
</dbReference>
<dbReference type="GO" id="GO:0005737">
    <property type="term" value="C:cytoplasm"/>
    <property type="evidence" value="ECO:0007669"/>
    <property type="project" value="UniProtKB-SubCell"/>
</dbReference>
<dbReference type="GO" id="GO:0016020">
    <property type="term" value="C:membrane"/>
    <property type="evidence" value="ECO:0007669"/>
    <property type="project" value="GOC"/>
</dbReference>
<dbReference type="GO" id="GO:0019171">
    <property type="term" value="F:(3R)-hydroxyacyl-[acyl-carrier-protein] dehydratase activity"/>
    <property type="evidence" value="ECO:0007669"/>
    <property type="project" value="UniProtKB-EC"/>
</dbReference>
<dbReference type="GO" id="GO:0006633">
    <property type="term" value="P:fatty acid biosynthetic process"/>
    <property type="evidence" value="ECO:0007669"/>
    <property type="project" value="UniProtKB-UniRule"/>
</dbReference>
<dbReference type="GO" id="GO:0009245">
    <property type="term" value="P:lipid A biosynthetic process"/>
    <property type="evidence" value="ECO:0007669"/>
    <property type="project" value="UniProtKB-UniRule"/>
</dbReference>
<dbReference type="CDD" id="cd01288">
    <property type="entry name" value="FabZ"/>
    <property type="match status" value="1"/>
</dbReference>
<dbReference type="FunFam" id="3.10.129.10:FF:000001">
    <property type="entry name" value="3-hydroxyacyl-[acyl-carrier-protein] dehydratase FabZ"/>
    <property type="match status" value="1"/>
</dbReference>
<dbReference type="Gene3D" id="3.10.129.10">
    <property type="entry name" value="Hotdog Thioesterase"/>
    <property type="match status" value="1"/>
</dbReference>
<dbReference type="HAMAP" id="MF_00406">
    <property type="entry name" value="FabZ"/>
    <property type="match status" value="1"/>
</dbReference>
<dbReference type="InterPro" id="IPR013114">
    <property type="entry name" value="FabA_FabZ"/>
</dbReference>
<dbReference type="InterPro" id="IPR010084">
    <property type="entry name" value="FabZ"/>
</dbReference>
<dbReference type="InterPro" id="IPR029069">
    <property type="entry name" value="HotDog_dom_sf"/>
</dbReference>
<dbReference type="NCBIfam" id="TIGR01750">
    <property type="entry name" value="fabZ"/>
    <property type="match status" value="1"/>
</dbReference>
<dbReference type="NCBIfam" id="NF000582">
    <property type="entry name" value="PRK00006.1"/>
    <property type="match status" value="1"/>
</dbReference>
<dbReference type="PANTHER" id="PTHR30272">
    <property type="entry name" value="3-HYDROXYACYL-[ACYL-CARRIER-PROTEIN] DEHYDRATASE"/>
    <property type="match status" value="1"/>
</dbReference>
<dbReference type="PANTHER" id="PTHR30272:SF1">
    <property type="entry name" value="3-HYDROXYACYL-[ACYL-CARRIER-PROTEIN] DEHYDRATASE"/>
    <property type="match status" value="1"/>
</dbReference>
<dbReference type="Pfam" id="PF07977">
    <property type="entry name" value="FabA"/>
    <property type="match status" value="1"/>
</dbReference>
<dbReference type="SUPFAM" id="SSF54637">
    <property type="entry name" value="Thioesterase/thiol ester dehydrase-isomerase"/>
    <property type="match status" value="1"/>
</dbReference>